<organism>
    <name type="scientific">Mus musculus</name>
    <name type="common">Mouse</name>
    <dbReference type="NCBI Taxonomy" id="10090"/>
    <lineage>
        <taxon>Eukaryota</taxon>
        <taxon>Metazoa</taxon>
        <taxon>Chordata</taxon>
        <taxon>Craniata</taxon>
        <taxon>Vertebrata</taxon>
        <taxon>Euteleostomi</taxon>
        <taxon>Mammalia</taxon>
        <taxon>Eutheria</taxon>
        <taxon>Euarchontoglires</taxon>
        <taxon>Glires</taxon>
        <taxon>Rodentia</taxon>
        <taxon>Myomorpha</taxon>
        <taxon>Muroidea</taxon>
        <taxon>Muridae</taxon>
        <taxon>Murinae</taxon>
        <taxon>Mus</taxon>
        <taxon>Mus</taxon>
    </lineage>
</organism>
<gene>
    <name type="primary">Znf518b</name>
    <name type="synonym">Kiaa1729</name>
    <name type="synonym">Zfp518b</name>
</gene>
<accession>B2RRE4</accession>
<accession>Q69ZC1</accession>
<name>Z518B_MOUSE</name>
<keyword id="KW-0156">Chromatin regulator</keyword>
<keyword id="KW-0238">DNA-binding</keyword>
<keyword id="KW-1017">Isopeptide bond</keyword>
<keyword id="KW-0479">Metal-binding</keyword>
<keyword id="KW-0539">Nucleus</keyword>
<keyword id="KW-1185">Reference proteome</keyword>
<keyword id="KW-0677">Repeat</keyword>
<keyword id="KW-0804">Transcription</keyword>
<keyword id="KW-0805">Transcription regulation</keyword>
<keyword id="KW-0832">Ubl conjugation</keyword>
<keyword id="KW-0862">Zinc</keyword>
<keyword id="KW-0863">Zinc-finger</keyword>
<comment type="function">
    <text evidence="4">Through its association with the EHMT1-EHMT2/G9A and PRC2/EED-EZH2 histone methyltransferase complexes may function in gene silencing, regulating repressive post-translational methylation of histone tails at promoters of target genes.</text>
</comment>
<comment type="subcellular location">
    <subcellularLocation>
        <location evidence="4">Nucleus</location>
    </subcellularLocation>
</comment>
<comment type="similarity">
    <text evidence="5">Belongs to the krueppel C2H2-type zinc-finger protein family.</text>
</comment>
<protein>
    <recommendedName>
        <fullName>Zinc finger protein 518B</fullName>
    </recommendedName>
</protein>
<evidence type="ECO:0000250" key="1">
    <source>
        <dbReference type="UniProtKB" id="Q9C0D4"/>
    </source>
</evidence>
<evidence type="ECO:0000255" key="2">
    <source>
        <dbReference type="PROSITE-ProRule" id="PRU00042"/>
    </source>
</evidence>
<evidence type="ECO:0000256" key="3">
    <source>
        <dbReference type="SAM" id="MobiDB-lite"/>
    </source>
</evidence>
<evidence type="ECO:0000269" key="4">
    <source>
    </source>
</evidence>
<evidence type="ECO:0000305" key="5"/>
<dbReference type="EMBL" id="BC138368">
    <property type="protein sequence ID" value="AAI38369.1"/>
    <property type="molecule type" value="mRNA"/>
</dbReference>
<dbReference type="EMBL" id="BC138369">
    <property type="protein sequence ID" value="AAI38370.1"/>
    <property type="molecule type" value="mRNA"/>
</dbReference>
<dbReference type="EMBL" id="AK173245">
    <property type="protein sequence ID" value="BAD32523.1"/>
    <property type="molecule type" value="mRNA"/>
</dbReference>
<dbReference type="FunCoup" id="B2RRE4">
    <property type="interactions" value="323"/>
</dbReference>
<dbReference type="STRING" id="10090.ENSMUSP00000137381"/>
<dbReference type="GlyGen" id="B2RRE4">
    <property type="glycosylation" value="1 site"/>
</dbReference>
<dbReference type="iPTMnet" id="B2RRE4"/>
<dbReference type="PhosphoSitePlus" id="B2RRE4"/>
<dbReference type="PaxDb" id="10090-ENSMUSP00000061753"/>
<dbReference type="PeptideAtlas" id="B2RRE4"/>
<dbReference type="ProteomicsDB" id="302101"/>
<dbReference type="AGR" id="MGI:2140750"/>
<dbReference type="MGI" id="MGI:2140750">
    <property type="gene designation" value="Zfp518b"/>
</dbReference>
<dbReference type="eggNOG" id="KOG1721">
    <property type="taxonomic scope" value="Eukaryota"/>
</dbReference>
<dbReference type="InParanoid" id="B2RRE4"/>
<dbReference type="PhylomeDB" id="B2RRE4"/>
<dbReference type="PRO" id="PR:B2RRE4"/>
<dbReference type="Proteomes" id="UP000000589">
    <property type="component" value="Unplaced"/>
</dbReference>
<dbReference type="RNAct" id="B2RRE4">
    <property type="molecule type" value="protein"/>
</dbReference>
<dbReference type="GO" id="GO:0005634">
    <property type="term" value="C:nucleus"/>
    <property type="evidence" value="ECO:0007669"/>
    <property type="project" value="UniProtKB-SubCell"/>
</dbReference>
<dbReference type="GO" id="GO:0003677">
    <property type="term" value="F:DNA binding"/>
    <property type="evidence" value="ECO:0007669"/>
    <property type="project" value="UniProtKB-KW"/>
</dbReference>
<dbReference type="GO" id="GO:0008270">
    <property type="term" value="F:zinc ion binding"/>
    <property type="evidence" value="ECO:0007669"/>
    <property type="project" value="UniProtKB-KW"/>
</dbReference>
<dbReference type="GO" id="GO:0006325">
    <property type="term" value="P:chromatin organization"/>
    <property type="evidence" value="ECO:0007669"/>
    <property type="project" value="UniProtKB-KW"/>
</dbReference>
<dbReference type="FunFam" id="3.30.160.60:FF:004065">
    <property type="match status" value="1"/>
</dbReference>
<dbReference type="Gene3D" id="3.30.160.60">
    <property type="entry name" value="Classic Zinc Finger"/>
    <property type="match status" value="1"/>
</dbReference>
<dbReference type="InterPro" id="IPR036236">
    <property type="entry name" value="Znf_C2H2_sf"/>
</dbReference>
<dbReference type="InterPro" id="IPR013087">
    <property type="entry name" value="Znf_C2H2_type"/>
</dbReference>
<dbReference type="PANTHER" id="PTHR24379:SF121">
    <property type="entry name" value="C2H2-TYPE DOMAIN-CONTAINING PROTEIN"/>
    <property type="match status" value="1"/>
</dbReference>
<dbReference type="PANTHER" id="PTHR24379">
    <property type="entry name" value="KRAB AND ZINC FINGER DOMAIN-CONTAINING"/>
    <property type="match status" value="1"/>
</dbReference>
<dbReference type="SMART" id="SM00355">
    <property type="entry name" value="ZnF_C2H2"/>
    <property type="match status" value="4"/>
</dbReference>
<dbReference type="SUPFAM" id="SSF57667">
    <property type="entry name" value="beta-beta-alpha zinc fingers"/>
    <property type="match status" value="1"/>
</dbReference>
<dbReference type="PROSITE" id="PS00028">
    <property type="entry name" value="ZINC_FINGER_C2H2_1"/>
    <property type="match status" value="1"/>
</dbReference>
<dbReference type="PROSITE" id="PS50157">
    <property type="entry name" value="ZINC_FINGER_C2H2_2"/>
    <property type="match status" value="2"/>
</dbReference>
<proteinExistence type="evidence at transcript level"/>
<reference key="1">
    <citation type="journal article" date="2004" name="Genome Res.">
        <title>The status, quality, and expansion of the NIH full-length cDNA project: the Mammalian Gene Collection (MGC).</title>
        <authorList>
            <consortium name="The MGC Project Team"/>
        </authorList>
    </citation>
    <scope>NUCLEOTIDE SEQUENCE [LARGE SCALE MRNA]</scope>
    <source>
        <tissue>Brain</tissue>
    </source>
</reference>
<reference key="2">
    <citation type="journal article" date="2004" name="DNA Res.">
        <title>Prediction of the coding sequences of mouse homologues of KIAA gene: IV. The complete nucleotide sequences of 500 mouse KIAA-homologous cDNAs identified by screening of terminal sequences of cDNA clones randomly sampled from size-fractionated libraries.</title>
        <authorList>
            <person name="Okazaki N."/>
            <person name="Kikuno R."/>
            <person name="Ohara R."/>
            <person name="Inamoto S."/>
            <person name="Koseki H."/>
            <person name="Hiraoka S."/>
            <person name="Saga Y."/>
            <person name="Seino S."/>
            <person name="Nishimura M."/>
            <person name="Kaisho T."/>
            <person name="Hoshino K."/>
            <person name="Kitamura H."/>
            <person name="Nagase T."/>
            <person name="Ohara O."/>
            <person name="Koga H."/>
        </authorList>
    </citation>
    <scope>NUCLEOTIDE SEQUENCE [LARGE SCALE MRNA] OF 102-1077</scope>
    <source>
        <tissue>Embryonic tail</tissue>
    </source>
</reference>
<reference key="3">
    <citation type="journal article" date="2015" name="Mol. Cell. Proteomics">
        <title>Functional Proteomic Analysis of Repressive Histone Methyltransferase Complexes Reveals ZNF518B as a G9A Regulator.</title>
        <authorList>
            <person name="Maier V.K."/>
            <person name="Feeney C.M."/>
            <person name="Taylor J.E."/>
            <person name="Creech A.L."/>
            <person name="Qiao J.W."/>
            <person name="Szanto A."/>
            <person name="Das P.P."/>
            <person name="Chevrier N."/>
            <person name="Cifuentes-Rojas C."/>
            <person name="Orkin S.H."/>
            <person name="Carr S.A."/>
            <person name="Jaffe J.D."/>
            <person name="Mertins P."/>
            <person name="Lee J.T."/>
        </authorList>
    </citation>
    <scope>FUNCTION</scope>
    <scope>SUBCELLULAR LOCATION</scope>
</reference>
<feature type="chain" id="PRO_0000353095" description="Zinc finger protein 518B">
    <location>
        <begin position="1"/>
        <end position="1077"/>
    </location>
</feature>
<feature type="zinc finger region" description="C2H2-type 1" evidence="2">
    <location>
        <begin position="160"/>
        <end position="182"/>
    </location>
</feature>
<feature type="zinc finger region" description="C2H2-type 2" evidence="2">
    <location>
        <begin position="188"/>
        <end position="211"/>
    </location>
</feature>
<feature type="zinc finger region" description="C2H2-type 3" evidence="2">
    <location>
        <begin position="1039"/>
        <end position="1061"/>
    </location>
</feature>
<feature type="region of interest" description="Disordered" evidence="3">
    <location>
        <begin position="9"/>
        <end position="35"/>
    </location>
</feature>
<feature type="region of interest" description="Disordered" evidence="3">
    <location>
        <begin position="372"/>
        <end position="397"/>
    </location>
</feature>
<feature type="region of interest" description="Disordered" evidence="3">
    <location>
        <begin position="561"/>
        <end position="585"/>
    </location>
</feature>
<feature type="region of interest" description="Disordered" evidence="3">
    <location>
        <begin position="599"/>
        <end position="622"/>
    </location>
</feature>
<feature type="region of interest" description="Disordered" evidence="3">
    <location>
        <begin position="675"/>
        <end position="739"/>
    </location>
</feature>
<feature type="region of interest" description="Disordered" evidence="3">
    <location>
        <begin position="825"/>
        <end position="852"/>
    </location>
</feature>
<feature type="region of interest" description="Disordered" evidence="3">
    <location>
        <begin position="895"/>
        <end position="914"/>
    </location>
</feature>
<feature type="compositionally biased region" description="Polar residues" evidence="3">
    <location>
        <begin position="9"/>
        <end position="30"/>
    </location>
</feature>
<feature type="compositionally biased region" description="Basic and acidic residues" evidence="3">
    <location>
        <begin position="564"/>
        <end position="574"/>
    </location>
</feature>
<feature type="compositionally biased region" description="Polar residues" evidence="3">
    <location>
        <begin position="605"/>
        <end position="621"/>
    </location>
</feature>
<feature type="compositionally biased region" description="Polar residues" evidence="3">
    <location>
        <begin position="675"/>
        <end position="688"/>
    </location>
</feature>
<feature type="cross-link" description="Glycyl lysine isopeptide (Lys-Gly) (interchain with G-Cter in SUMO2)" evidence="1">
    <location>
        <position position="479"/>
    </location>
</feature>
<feature type="cross-link" description="Glycyl lysine isopeptide (Lys-Gly) (interchain with G-Cter in SUMO2)" evidence="1">
    <location>
        <position position="847"/>
    </location>
</feature>
<feature type="cross-link" description="Glycyl lysine isopeptide (Lys-Gly) (interchain with G-Cter in SUMO2)" evidence="1">
    <location>
        <position position="861"/>
    </location>
</feature>
<sequence length="1077" mass="118997">MKDIGEQLYTTQVNGGPSSLTMSPKQPNRATRTERQEAQTLLYQGSEAEAATMTIATCVQCKSVHKIPTQDLRKGPGQSQDTYVCFKCSLRAVPTQLHFVNNNAGAAHVRNETETISSPVNKFKVRNFKPGKYYCDKCRFSTKDPLQYRKHTLQHEEIRFICSHCSYISYTKGEFQRHLVKHTGIFPYRCEYCDYGAIRNDYIVKHRRRVHERAGAKRPFKTVAKLEPKRTSIPKQSMELSKGPSPRAAFQNKLSDQLSRFSLHANKDKTHNLMLLPELKKYQKDVVCIPNKVTLSEPREVSLLGNKNVEVEVLSPSKEPVHPGMPLTVMAPSELVVPTNCLAQLMDVKVVNGAQQLVLKLFPLEENARLETSRGDGGTSECLSTEKGSGGQKKMLSPEASRSLAVEGNAGDFVGLDRLHSLVQKQLKNVKWVKSCNFFMPNSGVHSQQESFLGSDTIKELQKSHSLCPPRALPSAAIKSHSPASVQNSVPYGPGATVSHFLSKAAVAFADDRRGARSNSQQLLPLASLPSKVPFSGEKGLLPIGESDLEARNRISRPETLVSSDRKLEDKQMESKAVGNTGQVSSVQNKEYLHINITGEDKPRSQQPGDQPGQPKTSETAGATFEGPIISSVFSLSSGSENVPEAIKWNSSTTKIKSIELLRRKIAQLIESCGKPSSLSANSAQRRSIGQAPKLTSKATPKAIQEMSVSLTGPGPTPGPSVGPLQKPPNEDSITGSRQLVPQQVCPQFISANDGKMENRVTRKTPVATPVLIPKGAVLRVLNSSEDAHIIEATCDTPVSIPCSEAQLAGTLPFCPMKQTGSGSQPLTCRSGPADMSPGLETSLRPKSRKEDTICSATAKKMVPVYSTAPGSSDSIRQGRPVSRNLTVSKNKTKQVNSTKKKNKMQANPGRYFKDPPSFFQVARQLRLIAAKPDQLIKCPRRNQPVIVLNHPDVDSPEVTNVMKVINKYKGNVLKVVLSERTRCQLGVRRYHMRLTYQNVAETNHMKRQMMLKMKLKKVHKNNYQVVGSMPDDPAQCVFKCWFCGRLYEDQEEWMSHGQRHLIEATRDWDVLSSKGK</sequence>